<protein>
    <recommendedName>
        <fullName evidence="1">Argininosuccinate synthase</fullName>
        <ecNumber evidence="1">6.3.4.5</ecNumber>
    </recommendedName>
    <alternativeName>
        <fullName evidence="1">Citrulline--aspartate ligase</fullName>
    </alternativeName>
</protein>
<proteinExistence type="inferred from homology"/>
<dbReference type="EC" id="6.3.4.5" evidence="1"/>
<dbReference type="EMBL" id="CU207211">
    <property type="protein sequence ID" value="CAL61058.1"/>
    <property type="molecule type" value="Genomic_DNA"/>
</dbReference>
<dbReference type="SMR" id="A4G3H1"/>
<dbReference type="STRING" id="204773.HEAR0871"/>
<dbReference type="KEGG" id="har:HEAR0871"/>
<dbReference type="eggNOG" id="COG0137">
    <property type="taxonomic scope" value="Bacteria"/>
</dbReference>
<dbReference type="HOGENOM" id="CLU_032784_4_1_4"/>
<dbReference type="OrthoDB" id="9801641at2"/>
<dbReference type="UniPathway" id="UPA00068">
    <property type="reaction ID" value="UER00113"/>
</dbReference>
<dbReference type="Proteomes" id="UP000006697">
    <property type="component" value="Chromosome"/>
</dbReference>
<dbReference type="GO" id="GO:0005737">
    <property type="term" value="C:cytoplasm"/>
    <property type="evidence" value="ECO:0007669"/>
    <property type="project" value="UniProtKB-SubCell"/>
</dbReference>
<dbReference type="GO" id="GO:0004055">
    <property type="term" value="F:argininosuccinate synthase activity"/>
    <property type="evidence" value="ECO:0007669"/>
    <property type="project" value="UniProtKB-UniRule"/>
</dbReference>
<dbReference type="GO" id="GO:0005524">
    <property type="term" value="F:ATP binding"/>
    <property type="evidence" value="ECO:0007669"/>
    <property type="project" value="UniProtKB-UniRule"/>
</dbReference>
<dbReference type="GO" id="GO:0042803">
    <property type="term" value="F:protein homodimerization activity"/>
    <property type="evidence" value="ECO:0007669"/>
    <property type="project" value="InterPro"/>
</dbReference>
<dbReference type="GO" id="GO:0000053">
    <property type="term" value="P:argininosuccinate metabolic process"/>
    <property type="evidence" value="ECO:0007669"/>
    <property type="project" value="TreeGrafter"/>
</dbReference>
<dbReference type="GO" id="GO:0006526">
    <property type="term" value="P:L-arginine biosynthetic process"/>
    <property type="evidence" value="ECO:0007669"/>
    <property type="project" value="UniProtKB-UniRule"/>
</dbReference>
<dbReference type="GO" id="GO:0000050">
    <property type="term" value="P:urea cycle"/>
    <property type="evidence" value="ECO:0007669"/>
    <property type="project" value="TreeGrafter"/>
</dbReference>
<dbReference type="CDD" id="cd01999">
    <property type="entry name" value="ASS"/>
    <property type="match status" value="1"/>
</dbReference>
<dbReference type="Gene3D" id="1.10.287.400">
    <property type="match status" value="1"/>
</dbReference>
<dbReference type="Gene3D" id="3.90.1260.10">
    <property type="entry name" value="Argininosuccinate synthetase, chain A, domain 2"/>
    <property type="match status" value="1"/>
</dbReference>
<dbReference type="Gene3D" id="3.40.50.620">
    <property type="entry name" value="HUPs"/>
    <property type="match status" value="1"/>
</dbReference>
<dbReference type="HAMAP" id="MF_00581">
    <property type="entry name" value="Arg_succ_synth_type2"/>
    <property type="match status" value="1"/>
</dbReference>
<dbReference type="InterPro" id="IPR023437">
    <property type="entry name" value="Arg_succ_synth_type2_subfam"/>
</dbReference>
<dbReference type="InterPro" id="IPR048268">
    <property type="entry name" value="Arginosuc_syn_C"/>
</dbReference>
<dbReference type="InterPro" id="IPR048267">
    <property type="entry name" value="Arginosuc_syn_N"/>
</dbReference>
<dbReference type="InterPro" id="IPR001518">
    <property type="entry name" value="Arginosuc_synth"/>
</dbReference>
<dbReference type="InterPro" id="IPR018223">
    <property type="entry name" value="Arginosuc_synth_CS"/>
</dbReference>
<dbReference type="InterPro" id="IPR023434">
    <property type="entry name" value="Arginosuc_synth_type_1_subfam"/>
</dbReference>
<dbReference type="InterPro" id="IPR024074">
    <property type="entry name" value="AS_cat/multimer_dom_body"/>
</dbReference>
<dbReference type="InterPro" id="IPR024073">
    <property type="entry name" value="AS_multimer_C_tail"/>
</dbReference>
<dbReference type="InterPro" id="IPR014729">
    <property type="entry name" value="Rossmann-like_a/b/a_fold"/>
</dbReference>
<dbReference type="NCBIfam" id="TIGR00032">
    <property type="entry name" value="argG"/>
    <property type="match status" value="1"/>
</dbReference>
<dbReference type="NCBIfam" id="NF003779">
    <property type="entry name" value="PRK05370.1"/>
    <property type="match status" value="1"/>
</dbReference>
<dbReference type="PANTHER" id="PTHR11587">
    <property type="entry name" value="ARGININOSUCCINATE SYNTHASE"/>
    <property type="match status" value="1"/>
</dbReference>
<dbReference type="PANTHER" id="PTHR11587:SF2">
    <property type="entry name" value="ARGININOSUCCINATE SYNTHASE"/>
    <property type="match status" value="1"/>
</dbReference>
<dbReference type="Pfam" id="PF20979">
    <property type="entry name" value="Arginosuc_syn_C"/>
    <property type="match status" value="1"/>
</dbReference>
<dbReference type="Pfam" id="PF00764">
    <property type="entry name" value="Arginosuc_synth"/>
    <property type="match status" value="1"/>
</dbReference>
<dbReference type="SUPFAM" id="SSF52402">
    <property type="entry name" value="Adenine nucleotide alpha hydrolases-like"/>
    <property type="match status" value="1"/>
</dbReference>
<dbReference type="SUPFAM" id="SSF69864">
    <property type="entry name" value="Argininosuccinate synthetase, C-terminal domain"/>
    <property type="match status" value="1"/>
</dbReference>
<dbReference type="PROSITE" id="PS00564">
    <property type="entry name" value="ARGININOSUCCIN_SYN_1"/>
    <property type="match status" value="1"/>
</dbReference>
<dbReference type="PROSITE" id="PS00565">
    <property type="entry name" value="ARGININOSUCCIN_SYN_2"/>
    <property type="match status" value="1"/>
</dbReference>
<comment type="catalytic activity">
    <reaction evidence="1">
        <text>L-citrulline + L-aspartate + ATP = 2-(N(omega)-L-arginino)succinate + AMP + diphosphate + H(+)</text>
        <dbReference type="Rhea" id="RHEA:10932"/>
        <dbReference type="ChEBI" id="CHEBI:15378"/>
        <dbReference type="ChEBI" id="CHEBI:29991"/>
        <dbReference type="ChEBI" id="CHEBI:30616"/>
        <dbReference type="ChEBI" id="CHEBI:33019"/>
        <dbReference type="ChEBI" id="CHEBI:57472"/>
        <dbReference type="ChEBI" id="CHEBI:57743"/>
        <dbReference type="ChEBI" id="CHEBI:456215"/>
        <dbReference type="EC" id="6.3.4.5"/>
    </reaction>
</comment>
<comment type="pathway">
    <text evidence="1">Amino-acid biosynthesis; L-arginine biosynthesis; L-arginine from L-ornithine and carbamoyl phosphate: step 2/3.</text>
</comment>
<comment type="subunit">
    <text evidence="1">Homotetramer.</text>
</comment>
<comment type="subcellular location">
    <subcellularLocation>
        <location evidence="1">Cytoplasm</location>
    </subcellularLocation>
</comment>
<comment type="similarity">
    <text evidence="1">Belongs to the argininosuccinate synthase family. Type 2 subfamily.</text>
</comment>
<evidence type="ECO:0000255" key="1">
    <source>
        <dbReference type="HAMAP-Rule" id="MF_00581"/>
    </source>
</evidence>
<sequence length="445" mass="49531">MSNILQSVPVNQKVGIAFSGGLDTSAALHWMRQKGAIPYAYTANLGQPDETDYNAIPEKAKAYGAELARLIDCREQLVAEGIAALQSGAFHISTAGVTYFNTTPLGRAVTGTMLVAAMKEDNVDIWGDGSTFKGNDIERFYRYGLLMNPALRIYKPWLDDAFINELGGRKEMSEFLIKSGFDYKMSTEKAYSTDSNILGATHEAKDLEELSSGMQIVEPIMGVAFWRDDVEVKRETVTVRFEEGRPIALNGVVYTDLVELMLEANRIGGRHGLGMSDQIENRIIEAKSRGIYEAPGLALLFIAYERLITGIHNEDTIEQYRESGRRLGRLLYQGRWFDPQAIMLREAAQRWVARAITGEVTIELRRGNDYSILNTVSANLTYAPERLSMEKVEDAPFSPADRIGQLTMRNLDITDTRHKLAIYSSAGLLTGNSSVALPSFEKDKK</sequence>
<name>ASSY_HERAR</name>
<feature type="chain" id="PRO_1000129754" description="Argininosuccinate synthase">
    <location>
        <begin position="1"/>
        <end position="445"/>
    </location>
</feature>
<feature type="binding site" evidence="1">
    <location>
        <begin position="17"/>
        <end position="25"/>
    </location>
    <ligand>
        <name>ATP</name>
        <dbReference type="ChEBI" id="CHEBI:30616"/>
    </ligand>
</feature>
<feature type="binding site" evidence="1">
    <location>
        <position position="43"/>
    </location>
    <ligand>
        <name>ATP</name>
        <dbReference type="ChEBI" id="CHEBI:30616"/>
    </ligand>
</feature>
<feature type="binding site" evidence="1">
    <location>
        <position position="99"/>
    </location>
    <ligand>
        <name>L-citrulline</name>
        <dbReference type="ChEBI" id="CHEBI:57743"/>
    </ligand>
</feature>
<feature type="binding site" evidence="1">
    <location>
        <position position="129"/>
    </location>
    <ligand>
        <name>ATP</name>
        <dbReference type="ChEBI" id="CHEBI:30616"/>
    </ligand>
</feature>
<feature type="binding site" evidence="1">
    <location>
        <position position="131"/>
    </location>
    <ligand>
        <name>ATP</name>
        <dbReference type="ChEBI" id="CHEBI:30616"/>
    </ligand>
</feature>
<feature type="binding site" evidence="1">
    <location>
        <position position="131"/>
    </location>
    <ligand>
        <name>L-aspartate</name>
        <dbReference type="ChEBI" id="CHEBI:29991"/>
    </ligand>
</feature>
<feature type="binding site" evidence="1">
    <location>
        <position position="135"/>
    </location>
    <ligand>
        <name>L-aspartate</name>
        <dbReference type="ChEBI" id="CHEBI:29991"/>
    </ligand>
</feature>
<feature type="binding site" evidence="1">
    <location>
        <position position="135"/>
    </location>
    <ligand>
        <name>L-citrulline</name>
        <dbReference type="ChEBI" id="CHEBI:57743"/>
    </ligand>
</feature>
<feature type="binding site" evidence="1">
    <location>
        <position position="136"/>
    </location>
    <ligand>
        <name>ATP</name>
        <dbReference type="ChEBI" id="CHEBI:30616"/>
    </ligand>
</feature>
<feature type="binding site" evidence="1">
    <location>
        <position position="136"/>
    </location>
    <ligand>
        <name>L-aspartate</name>
        <dbReference type="ChEBI" id="CHEBI:29991"/>
    </ligand>
</feature>
<feature type="binding site" evidence="1">
    <location>
        <position position="139"/>
    </location>
    <ligand>
        <name>L-citrulline</name>
        <dbReference type="ChEBI" id="CHEBI:57743"/>
    </ligand>
</feature>
<feature type="binding site" evidence="1">
    <location>
        <position position="192"/>
    </location>
    <ligand>
        <name>L-citrulline</name>
        <dbReference type="ChEBI" id="CHEBI:57743"/>
    </ligand>
</feature>
<feature type="binding site" evidence="1">
    <location>
        <position position="194"/>
    </location>
    <ligand>
        <name>ATP</name>
        <dbReference type="ChEBI" id="CHEBI:30616"/>
    </ligand>
</feature>
<feature type="binding site" evidence="1">
    <location>
        <position position="201"/>
    </location>
    <ligand>
        <name>L-citrulline</name>
        <dbReference type="ChEBI" id="CHEBI:57743"/>
    </ligand>
</feature>
<feature type="binding site" evidence="1">
    <location>
        <position position="203"/>
    </location>
    <ligand>
        <name>L-citrulline</name>
        <dbReference type="ChEBI" id="CHEBI:57743"/>
    </ligand>
</feature>
<feature type="binding site" evidence="1">
    <location>
        <position position="280"/>
    </location>
    <ligand>
        <name>L-citrulline</name>
        <dbReference type="ChEBI" id="CHEBI:57743"/>
    </ligand>
</feature>
<gene>
    <name evidence="1" type="primary">argG</name>
    <name type="ordered locus">HEAR0871</name>
</gene>
<organism>
    <name type="scientific">Herminiimonas arsenicoxydans</name>
    <dbReference type="NCBI Taxonomy" id="204773"/>
    <lineage>
        <taxon>Bacteria</taxon>
        <taxon>Pseudomonadati</taxon>
        <taxon>Pseudomonadota</taxon>
        <taxon>Betaproteobacteria</taxon>
        <taxon>Burkholderiales</taxon>
        <taxon>Oxalobacteraceae</taxon>
        <taxon>Herminiimonas</taxon>
    </lineage>
</organism>
<keyword id="KW-0028">Amino-acid biosynthesis</keyword>
<keyword id="KW-0055">Arginine biosynthesis</keyword>
<keyword id="KW-0067">ATP-binding</keyword>
<keyword id="KW-0963">Cytoplasm</keyword>
<keyword id="KW-0436">Ligase</keyword>
<keyword id="KW-0547">Nucleotide-binding</keyword>
<keyword id="KW-1185">Reference proteome</keyword>
<accession>A4G3H1</accession>
<reference key="1">
    <citation type="journal article" date="2007" name="PLoS Genet.">
        <title>A tale of two oxidation states: bacterial colonization of arsenic-rich environments.</title>
        <authorList>
            <person name="Muller D."/>
            <person name="Medigue C."/>
            <person name="Koechler S."/>
            <person name="Barbe V."/>
            <person name="Barakat M."/>
            <person name="Talla E."/>
            <person name="Bonnefoy V."/>
            <person name="Krin E."/>
            <person name="Arsene-Ploetze F."/>
            <person name="Carapito C."/>
            <person name="Chandler M."/>
            <person name="Cournoyer B."/>
            <person name="Cruveiller S."/>
            <person name="Dossat C."/>
            <person name="Duval S."/>
            <person name="Heymann M."/>
            <person name="Leize E."/>
            <person name="Lieutaud A."/>
            <person name="Lievremont D."/>
            <person name="Makita Y."/>
            <person name="Mangenot S."/>
            <person name="Nitschke W."/>
            <person name="Ortet P."/>
            <person name="Perdrial N."/>
            <person name="Schoepp B."/>
            <person name="Siguier P."/>
            <person name="Simeonova D.D."/>
            <person name="Rouy Z."/>
            <person name="Segurens B."/>
            <person name="Turlin E."/>
            <person name="Vallenet D."/>
            <person name="van Dorsselaer A."/>
            <person name="Weiss S."/>
            <person name="Weissenbach J."/>
            <person name="Lett M.-C."/>
            <person name="Danchin A."/>
            <person name="Bertin P.N."/>
        </authorList>
    </citation>
    <scope>NUCLEOTIDE SEQUENCE [LARGE SCALE GENOMIC DNA]</scope>
    <source>
        <strain>ULPAs1</strain>
    </source>
</reference>